<name>NTDP_BACMK</name>
<feature type="chain" id="PRO_1000199752" description="Nucleoside triphosphate/diphosphate phosphatase">
    <location>
        <begin position="1"/>
        <end position="176"/>
    </location>
</feature>
<feature type="active site" description="Proton donor" evidence="1">
    <location>
        <position position="23"/>
    </location>
</feature>
<feature type="binding site" evidence="1">
    <location>
        <position position="87"/>
    </location>
    <ligand>
        <name>Mg(2+)</name>
        <dbReference type="ChEBI" id="CHEBI:18420"/>
        <label>1</label>
    </ligand>
</feature>
<feature type="binding site" evidence="1">
    <location>
        <position position="103"/>
    </location>
    <ligand>
        <name>Mg(2+)</name>
        <dbReference type="ChEBI" id="CHEBI:18420"/>
        <label>1</label>
    </ligand>
</feature>
<feature type="binding site" evidence="1">
    <location>
        <position position="105"/>
    </location>
    <ligand>
        <name>Mg(2+)</name>
        <dbReference type="ChEBI" id="CHEBI:18420"/>
        <label>2</label>
    </ligand>
</feature>
<feature type="binding site" evidence="1">
    <location>
        <position position="107"/>
    </location>
    <ligand>
        <name>Mg(2+)</name>
        <dbReference type="ChEBI" id="CHEBI:18420"/>
        <label>1</label>
    </ligand>
</feature>
<feature type="binding site" evidence="1">
    <location>
        <position position="107"/>
    </location>
    <ligand>
        <name>Mg(2+)</name>
        <dbReference type="ChEBI" id="CHEBI:18420"/>
        <label>2</label>
    </ligand>
</feature>
<feature type="binding site" evidence="1">
    <location>
        <position position="120"/>
    </location>
    <ligand>
        <name>Mg(2+)</name>
        <dbReference type="ChEBI" id="CHEBI:18420"/>
        <label>2</label>
    </ligand>
</feature>
<feature type="binding site" evidence="1">
    <location>
        <position position="123"/>
    </location>
    <ligand>
        <name>Mg(2+)</name>
        <dbReference type="ChEBI" id="CHEBI:18420"/>
        <label>2</label>
    </ligand>
</feature>
<proteinExistence type="inferred from homology"/>
<keyword id="KW-0378">Hydrolase</keyword>
<keyword id="KW-0460">Magnesium</keyword>
<keyword id="KW-0479">Metal-binding</keyword>
<protein>
    <recommendedName>
        <fullName evidence="1">Nucleoside triphosphate/diphosphate phosphatase</fullName>
        <ecNumber evidence="1">3.6.1.15</ecNumber>
        <ecNumber evidence="1">3.6.1.6</ecNumber>
    </recommendedName>
</protein>
<comment type="function">
    <text evidence="1">Has nucleoside phosphatase activity towards nucleoside triphosphates and nucleoside diphosphates.</text>
</comment>
<comment type="catalytic activity">
    <reaction evidence="1">
        <text>a ribonucleoside 5'-triphosphate + H2O = a ribonucleoside 5'-diphosphate + phosphate + H(+)</text>
        <dbReference type="Rhea" id="RHEA:23680"/>
        <dbReference type="ChEBI" id="CHEBI:15377"/>
        <dbReference type="ChEBI" id="CHEBI:15378"/>
        <dbReference type="ChEBI" id="CHEBI:43474"/>
        <dbReference type="ChEBI" id="CHEBI:57930"/>
        <dbReference type="ChEBI" id="CHEBI:61557"/>
        <dbReference type="EC" id="3.6.1.15"/>
    </reaction>
</comment>
<comment type="catalytic activity">
    <reaction evidence="1">
        <text>a ribonucleoside 5'-diphosphate + H2O = a ribonucleoside 5'-phosphate + phosphate + H(+)</text>
        <dbReference type="Rhea" id="RHEA:36799"/>
        <dbReference type="ChEBI" id="CHEBI:15377"/>
        <dbReference type="ChEBI" id="CHEBI:15378"/>
        <dbReference type="ChEBI" id="CHEBI:43474"/>
        <dbReference type="ChEBI" id="CHEBI:57930"/>
        <dbReference type="ChEBI" id="CHEBI:58043"/>
        <dbReference type="EC" id="3.6.1.6"/>
    </reaction>
</comment>
<comment type="cofactor">
    <cofactor evidence="1">
        <name>Mg(2+)</name>
        <dbReference type="ChEBI" id="CHEBI:18420"/>
    </cofactor>
</comment>
<comment type="similarity">
    <text evidence="1">Belongs to the Ntdp family.</text>
</comment>
<gene>
    <name type="ordered locus">BcerKBAB4_0443</name>
</gene>
<accession>A9VSS3</accession>
<dbReference type="EC" id="3.6.1.15" evidence="1"/>
<dbReference type="EC" id="3.6.1.6" evidence="1"/>
<dbReference type="EMBL" id="CP000903">
    <property type="protein sequence ID" value="ABY41709.1"/>
    <property type="molecule type" value="Genomic_DNA"/>
</dbReference>
<dbReference type="RefSeq" id="WP_000506630.1">
    <property type="nucleotide sequence ID" value="NC_010184.1"/>
</dbReference>
<dbReference type="SMR" id="A9VSS3"/>
<dbReference type="KEGG" id="bwe:BcerKBAB4_0443"/>
<dbReference type="eggNOG" id="COG3557">
    <property type="taxonomic scope" value="Bacteria"/>
</dbReference>
<dbReference type="HOGENOM" id="CLU_109787_1_0_9"/>
<dbReference type="Proteomes" id="UP000002154">
    <property type="component" value="Chromosome"/>
</dbReference>
<dbReference type="GO" id="GO:0000287">
    <property type="term" value="F:magnesium ion binding"/>
    <property type="evidence" value="ECO:0007669"/>
    <property type="project" value="UniProtKB-UniRule"/>
</dbReference>
<dbReference type="GO" id="GO:0017110">
    <property type="term" value="F:nucleoside diphosphate phosphatase activity"/>
    <property type="evidence" value="ECO:0007669"/>
    <property type="project" value="UniProtKB-UniRule"/>
</dbReference>
<dbReference type="GO" id="GO:0017111">
    <property type="term" value="F:ribonucleoside triphosphate phosphatase activity"/>
    <property type="evidence" value="ECO:0007669"/>
    <property type="project" value="UniProtKB-UniRule"/>
</dbReference>
<dbReference type="Gene3D" id="2.40.380.10">
    <property type="entry name" value="FomD-like"/>
    <property type="match status" value="1"/>
</dbReference>
<dbReference type="HAMAP" id="MF_01568">
    <property type="entry name" value="Ntdp"/>
    <property type="match status" value="1"/>
</dbReference>
<dbReference type="InterPro" id="IPR007295">
    <property type="entry name" value="DUF402"/>
</dbReference>
<dbReference type="InterPro" id="IPR035930">
    <property type="entry name" value="FomD-like_sf"/>
</dbReference>
<dbReference type="InterPro" id="IPR050212">
    <property type="entry name" value="Ntdp-like"/>
</dbReference>
<dbReference type="InterPro" id="IPR016882">
    <property type="entry name" value="SA1684"/>
</dbReference>
<dbReference type="NCBIfam" id="NF010183">
    <property type="entry name" value="PRK13662.1"/>
    <property type="match status" value="1"/>
</dbReference>
<dbReference type="PANTHER" id="PTHR39159">
    <property type="match status" value="1"/>
</dbReference>
<dbReference type="PANTHER" id="PTHR39159:SF1">
    <property type="entry name" value="UPF0374 PROTEIN YGAC"/>
    <property type="match status" value="1"/>
</dbReference>
<dbReference type="Pfam" id="PF04167">
    <property type="entry name" value="DUF402"/>
    <property type="match status" value="1"/>
</dbReference>
<dbReference type="PIRSF" id="PIRSF028345">
    <property type="entry name" value="UCP028345"/>
    <property type="match status" value="1"/>
</dbReference>
<dbReference type="SUPFAM" id="SSF159234">
    <property type="entry name" value="FomD-like"/>
    <property type="match status" value="1"/>
</dbReference>
<sequence length="176" mass="21004">MGFPKEGEKVQIHSYKHNGSIHRMWEETTILKGTQSLVIGANDRTVVTESDGRTWVTREPAICYFHANYWFNVIGMLREEGVYYYCNLSSPFAYDSEALKYIDYDLDIKVYPDMTYTLLDEDEYEKHSQIMQYPPVIDTILKRNVAHLTQWIHQRKGPFAPDFVDMWYERYLMYRN</sequence>
<evidence type="ECO:0000255" key="1">
    <source>
        <dbReference type="HAMAP-Rule" id="MF_01568"/>
    </source>
</evidence>
<organism>
    <name type="scientific">Bacillus mycoides (strain KBAB4)</name>
    <name type="common">Bacillus weihenstephanensis</name>
    <dbReference type="NCBI Taxonomy" id="315730"/>
    <lineage>
        <taxon>Bacteria</taxon>
        <taxon>Bacillati</taxon>
        <taxon>Bacillota</taxon>
        <taxon>Bacilli</taxon>
        <taxon>Bacillales</taxon>
        <taxon>Bacillaceae</taxon>
        <taxon>Bacillus</taxon>
        <taxon>Bacillus cereus group</taxon>
    </lineage>
</organism>
<reference key="1">
    <citation type="journal article" date="2008" name="Chem. Biol. Interact.">
        <title>Extending the Bacillus cereus group genomics to putative food-borne pathogens of different toxicity.</title>
        <authorList>
            <person name="Lapidus A."/>
            <person name="Goltsman E."/>
            <person name="Auger S."/>
            <person name="Galleron N."/>
            <person name="Segurens B."/>
            <person name="Dossat C."/>
            <person name="Land M.L."/>
            <person name="Broussolle V."/>
            <person name="Brillard J."/>
            <person name="Guinebretiere M.-H."/>
            <person name="Sanchis V."/>
            <person name="Nguen-the C."/>
            <person name="Lereclus D."/>
            <person name="Richardson P."/>
            <person name="Wincker P."/>
            <person name="Weissenbach J."/>
            <person name="Ehrlich S.D."/>
            <person name="Sorokin A."/>
        </authorList>
    </citation>
    <scope>NUCLEOTIDE SEQUENCE [LARGE SCALE GENOMIC DNA]</scope>
    <source>
        <strain>KBAB4</strain>
    </source>
</reference>